<sequence length="488" mass="55169">MTKNNEAGWNLDHSYTTLPQSFYTEIPPTPVSSPELVKLNHSLAISLGFNPEELKKEAEIAIFAGNALPEGAHPLAQAYAGHQFGHFNMLGDGRALLIGEQMTPSGKRFDIQLKGSGPTPYSRRGDGRAALGPMLREYIISEAMYALDIPTTRSLAVVTTGEPTYRETKLPGAILTRVASSHIRVGTFQYAAARGSIEDLQSLADYTIKRHYPEIEAHENRYTALLQEVIKKQASLIAKWQLVGFIHGVMNTDNITISGETIDYGPCAFMDNYDQGTVFSSIDTQGRYAYGNQPYMAAWDLARLAESLIPILHEDEEEVLKIAQDEISKFSVQYEKQWFLGMKKKLGLFSNEEQDQSLIEQLLKMMEKFKADYTNTFRSLTLNTIENTALFESPEFKEWYKLWQSRLERQEESKENAYEMMKNNNPSIIPRNHRVEEALEAAVTNGDYSVMEKLLEALSNPYAYATEQEEYCVPPVPTNRPYRTFCGT</sequence>
<keyword id="KW-0067">ATP-binding</keyword>
<keyword id="KW-0460">Magnesium</keyword>
<keyword id="KW-0464">Manganese</keyword>
<keyword id="KW-0479">Metal-binding</keyword>
<keyword id="KW-0547">Nucleotide-binding</keyword>
<keyword id="KW-0548">Nucleotidyltransferase</keyword>
<keyword id="KW-0808">Transferase</keyword>
<gene>
    <name evidence="1" type="primary">ydiU</name>
    <name evidence="1" type="synonym">selO</name>
    <name type="ordered locus">BAA_3596</name>
</gene>
<dbReference type="EC" id="2.7.7.-" evidence="1"/>
<dbReference type="EC" id="2.7.7.108" evidence="1"/>
<dbReference type="EMBL" id="CP001598">
    <property type="protein sequence ID" value="ACQ50644.1"/>
    <property type="molecule type" value="Genomic_DNA"/>
</dbReference>
<dbReference type="RefSeq" id="WP_000164886.1">
    <property type="nucleotide sequence ID" value="NC_012659.1"/>
</dbReference>
<dbReference type="SMR" id="C3P3V9"/>
<dbReference type="GeneID" id="45023301"/>
<dbReference type="KEGG" id="bai:BAA_3596"/>
<dbReference type="HOGENOM" id="CLU_010245_4_1_9"/>
<dbReference type="GO" id="GO:0070733">
    <property type="term" value="F:AMPylase activity"/>
    <property type="evidence" value="ECO:0007669"/>
    <property type="project" value="RHEA"/>
</dbReference>
<dbReference type="GO" id="GO:0005524">
    <property type="term" value="F:ATP binding"/>
    <property type="evidence" value="ECO:0007669"/>
    <property type="project" value="UniProtKB-UniRule"/>
</dbReference>
<dbReference type="GO" id="GO:0000287">
    <property type="term" value="F:magnesium ion binding"/>
    <property type="evidence" value="ECO:0007669"/>
    <property type="project" value="UniProtKB-UniRule"/>
</dbReference>
<dbReference type="HAMAP" id="MF_00692">
    <property type="entry name" value="YdiU_SelO"/>
    <property type="match status" value="1"/>
</dbReference>
<dbReference type="InterPro" id="IPR003846">
    <property type="entry name" value="SelO"/>
</dbReference>
<dbReference type="NCBIfam" id="NF000658">
    <property type="entry name" value="PRK00029.1"/>
    <property type="match status" value="1"/>
</dbReference>
<dbReference type="PANTHER" id="PTHR32057">
    <property type="entry name" value="PROTEIN ADENYLYLTRANSFERASE SELO, MITOCHONDRIAL"/>
    <property type="match status" value="1"/>
</dbReference>
<dbReference type="PANTHER" id="PTHR32057:SF14">
    <property type="entry name" value="PROTEIN ADENYLYLTRANSFERASE SELO, MITOCHONDRIAL"/>
    <property type="match status" value="1"/>
</dbReference>
<dbReference type="Pfam" id="PF02696">
    <property type="entry name" value="SelO"/>
    <property type="match status" value="1"/>
</dbReference>
<protein>
    <recommendedName>
        <fullName evidence="1">Protein nucleotidyltransferase YdiU</fullName>
        <ecNumber evidence="1">2.7.7.-</ecNumber>
    </recommendedName>
    <alternativeName>
        <fullName evidence="1">Protein adenylyltransferase YdiU</fullName>
        <ecNumber evidence="1">2.7.7.108</ecNumber>
    </alternativeName>
    <alternativeName>
        <fullName evidence="1">Protein uridylyltransferase YdiU</fullName>
        <ecNumber evidence="1">2.7.7.-</ecNumber>
    </alternativeName>
</protein>
<proteinExistence type="inferred from homology"/>
<reference key="1">
    <citation type="submission" date="2009-04" db="EMBL/GenBank/DDBJ databases">
        <title>Genome sequence of Bacillus anthracis A0248.</title>
        <authorList>
            <person name="Dodson R.J."/>
            <person name="Munk A.C."/>
            <person name="Bruce D."/>
            <person name="Detter C."/>
            <person name="Tapia R."/>
            <person name="Sutton G."/>
            <person name="Sims D."/>
            <person name="Brettin T."/>
        </authorList>
    </citation>
    <scope>NUCLEOTIDE SEQUENCE [LARGE SCALE GENOMIC DNA]</scope>
    <source>
        <strain>A0248</strain>
    </source>
</reference>
<organism>
    <name type="scientific">Bacillus anthracis (strain A0248)</name>
    <dbReference type="NCBI Taxonomy" id="592021"/>
    <lineage>
        <taxon>Bacteria</taxon>
        <taxon>Bacillati</taxon>
        <taxon>Bacillota</taxon>
        <taxon>Bacilli</taxon>
        <taxon>Bacillales</taxon>
        <taxon>Bacillaceae</taxon>
        <taxon>Bacillus</taxon>
        <taxon>Bacillus cereus group</taxon>
    </lineage>
</organism>
<feature type="chain" id="PRO_1000200054" description="Protein nucleotidyltransferase YdiU">
    <location>
        <begin position="1"/>
        <end position="488"/>
    </location>
</feature>
<feature type="region of interest" description="Disordered" evidence="2">
    <location>
        <begin position="108"/>
        <end position="127"/>
    </location>
</feature>
<feature type="active site" description="Proton acceptor" evidence="1">
    <location>
        <position position="253"/>
    </location>
</feature>
<feature type="binding site" evidence="1">
    <location>
        <position position="91"/>
    </location>
    <ligand>
        <name>ATP</name>
        <dbReference type="ChEBI" id="CHEBI:30616"/>
    </ligand>
</feature>
<feature type="binding site" evidence="1">
    <location>
        <position position="93"/>
    </location>
    <ligand>
        <name>ATP</name>
        <dbReference type="ChEBI" id="CHEBI:30616"/>
    </ligand>
</feature>
<feature type="binding site" evidence="1">
    <location>
        <position position="94"/>
    </location>
    <ligand>
        <name>ATP</name>
        <dbReference type="ChEBI" id="CHEBI:30616"/>
    </ligand>
</feature>
<feature type="binding site" evidence="1">
    <location>
        <position position="114"/>
    </location>
    <ligand>
        <name>ATP</name>
        <dbReference type="ChEBI" id="CHEBI:30616"/>
    </ligand>
</feature>
<feature type="binding site" evidence="1">
    <location>
        <position position="126"/>
    </location>
    <ligand>
        <name>ATP</name>
        <dbReference type="ChEBI" id="CHEBI:30616"/>
    </ligand>
</feature>
<feature type="binding site" evidence="1">
    <location>
        <position position="127"/>
    </location>
    <ligand>
        <name>ATP</name>
        <dbReference type="ChEBI" id="CHEBI:30616"/>
    </ligand>
</feature>
<feature type="binding site" evidence="1">
    <location>
        <position position="177"/>
    </location>
    <ligand>
        <name>ATP</name>
        <dbReference type="ChEBI" id="CHEBI:30616"/>
    </ligand>
</feature>
<feature type="binding site" evidence="1">
    <location>
        <position position="184"/>
    </location>
    <ligand>
        <name>ATP</name>
        <dbReference type="ChEBI" id="CHEBI:30616"/>
    </ligand>
</feature>
<feature type="binding site" evidence="1">
    <location>
        <position position="254"/>
    </location>
    <ligand>
        <name>Mg(2+)</name>
        <dbReference type="ChEBI" id="CHEBI:18420"/>
    </ligand>
</feature>
<feature type="binding site" evidence="1">
    <location>
        <position position="263"/>
    </location>
    <ligand>
        <name>ATP</name>
        <dbReference type="ChEBI" id="CHEBI:30616"/>
    </ligand>
</feature>
<feature type="binding site" evidence="1">
    <location>
        <position position="263"/>
    </location>
    <ligand>
        <name>Mg(2+)</name>
        <dbReference type="ChEBI" id="CHEBI:18420"/>
    </ligand>
</feature>
<comment type="function">
    <text evidence="1">Nucleotidyltransferase involved in the post-translational modification of proteins. It can catalyze the addition of adenosine monophosphate (AMP) or uridine monophosphate (UMP) to a protein, resulting in modifications known as AMPylation and UMPylation.</text>
</comment>
<comment type="catalytic activity">
    <reaction evidence="1">
        <text>L-seryl-[protein] + ATP = 3-O-(5'-adenylyl)-L-seryl-[protein] + diphosphate</text>
        <dbReference type="Rhea" id="RHEA:58120"/>
        <dbReference type="Rhea" id="RHEA-COMP:9863"/>
        <dbReference type="Rhea" id="RHEA-COMP:15073"/>
        <dbReference type="ChEBI" id="CHEBI:29999"/>
        <dbReference type="ChEBI" id="CHEBI:30616"/>
        <dbReference type="ChEBI" id="CHEBI:33019"/>
        <dbReference type="ChEBI" id="CHEBI:142516"/>
        <dbReference type="EC" id="2.7.7.108"/>
    </reaction>
</comment>
<comment type="catalytic activity">
    <reaction evidence="1">
        <text>L-threonyl-[protein] + ATP = 3-O-(5'-adenylyl)-L-threonyl-[protein] + diphosphate</text>
        <dbReference type="Rhea" id="RHEA:54292"/>
        <dbReference type="Rhea" id="RHEA-COMP:11060"/>
        <dbReference type="Rhea" id="RHEA-COMP:13847"/>
        <dbReference type="ChEBI" id="CHEBI:30013"/>
        <dbReference type="ChEBI" id="CHEBI:30616"/>
        <dbReference type="ChEBI" id="CHEBI:33019"/>
        <dbReference type="ChEBI" id="CHEBI:138113"/>
        <dbReference type="EC" id="2.7.7.108"/>
    </reaction>
</comment>
<comment type="catalytic activity">
    <reaction evidence="1">
        <text>L-tyrosyl-[protein] + ATP = O-(5'-adenylyl)-L-tyrosyl-[protein] + diphosphate</text>
        <dbReference type="Rhea" id="RHEA:54288"/>
        <dbReference type="Rhea" id="RHEA-COMP:10136"/>
        <dbReference type="Rhea" id="RHEA-COMP:13846"/>
        <dbReference type="ChEBI" id="CHEBI:30616"/>
        <dbReference type="ChEBI" id="CHEBI:33019"/>
        <dbReference type="ChEBI" id="CHEBI:46858"/>
        <dbReference type="ChEBI" id="CHEBI:83624"/>
        <dbReference type="EC" id="2.7.7.108"/>
    </reaction>
</comment>
<comment type="catalytic activity">
    <reaction evidence="1">
        <text>L-histidyl-[protein] + UTP = N(tele)-(5'-uridylyl)-L-histidyl-[protein] + diphosphate</text>
        <dbReference type="Rhea" id="RHEA:83891"/>
        <dbReference type="Rhea" id="RHEA-COMP:9745"/>
        <dbReference type="Rhea" id="RHEA-COMP:20239"/>
        <dbReference type="ChEBI" id="CHEBI:29979"/>
        <dbReference type="ChEBI" id="CHEBI:33019"/>
        <dbReference type="ChEBI" id="CHEBI:46398"/>
        <dbReference type="ChEBI" id="CHEBI:233474"/>
    </reaction>
</comment>
<comment type="catalytic activity">
    <reaction evidence="1">
        <text>L-seryl-[protein] + UTP = O-(5'-uridylyl)-L-seryl-[protein] + diphosphate</text>
        <dbReference type="Rhea" id="RHEA:64604"/>
        <dbReference type="Rhea" id="RHEA-COMP:9863"/>
        <dbReference type="Rhea" id="RHEA-COMP:16635"/>
        <dbReference type="ChEBI" id="CHEBI:29999"/>
        <dbReference type="ChEBI" id="CHEBI:33019"/>
        <dbReference type="ChEBI" id="CHEBI:46398"/>
        <dbReference type="ChEBI" id="CHEBI:156051"/>
    </reaction>
</comment>
<comment type="catalytic activity">
    <reaction evidence="1">
        <text>L-tyrosyl-[protein] + UTP = O-(5'-uridylyl)-L-tyrosyl-[protein] + diphosphate</text>
        <dbReference type="Rhea" id="RHEA:83887"/>
        <dbReference type="Rhea" id="RHEA-COMP:10136"/>
        <dbReference type="Rhea" id="RHEA-COMP:20238"/>
        <dbReference type="ChEBI" id="CHEBI:33019"/>
        <dbReference type="ChEBI" id="CHEBI:46398"/>
        <dbReference type="ChEBI" id="CHEBI:46858"/>
        <dbReference type="ChEBI" id="CHEBI:90602"/>
    </reaction>
</comment>
<comment type="cofactor">
    <cofactor evidence="1">
        <name>Mg(2+)</name>
        <dbReference type="ChEBI" id="CHEBI:18420"/>
    </cofactor>
    <cofactor evidence="1">
        <name>Mn(2+)</name>
        <dbReference type="ChEBI" id="CHEBI:29035"/>
    </cofactor>
</comment>
<comment type="similarity">
    <text evidence="1">Belongs to the SELO family.</text>
</comment>
<accession>C3P3V9</accession>
<name>SELO_BACAA</name>
<evidence type="ECO:0000255" key="1">
    <source>
        <dbReference type="HAMAP-Rule" id="MF_00692"/>
    </source>
</evidence>
<evidence type="ECO:0000256" key="2">
    <source>
        <dbReference type="SAM" id="MobiDB-lite"/>
    </source>
</evidence>